<reference key="1">
    <citation type="submission" date="2005-12" db="EMBL/GenBank/DDBJ databases">
        <authorList>
            <consortium name="NIH - Mammalian Gene Collection (MGC) project"/>
        </authorList>
    </citation>
    <scope>NUCLEOTIDE SEQUENCE [LARGE SCALE MRNA]</scope>
    <source>
        <strain>Crossbred X Angus</strain>
        <tissue>Liver</tissue>
    </source>
</reference>
<name>LRC61_BOVIN</name>
<accession>Q2T9T5</accession>
<gene>
    <name type="primary">LRRC61</name>
</gene>
<protein>
    <recommendedName>
        <fullName>Leucine-rich repeat-containing protein 61</fullName>
    </recommendedName>
</protein>
<proteinExistence type="evidence at transcript level"/>
<dbReference type="EMBL" id="BC111278">
    <property type="protein sequence ID" value="AAI11279.1"/>
    <property type="molecule type" value="mRNA"/>
</dbReference>
<dbReference type="RefSeq" id="NP_001069899.1">
    <property type="nucleotide sequence ID" value="NM_001076431.1"/>
</dbReference>
<dbReference type="RefSeq" id="XP_024846679.1">
    <property type="nucleotide sequence ID" value="XM_024990911.2"/>
</dbReference>
<dbReference type="RefSeq" id="XP_059741739.1">
    <property type="nucleotide sequence ID" value="XM_059885756.1"/>
</dbReference>
<dbReference type="RefSeq" id="XP_059741740.1">
    <property type="nucleotide sequence ID" value="XM_059885757.1"/>
</dbReference>
<dbReference type="SMR" id="Q2T9T5"/>
<dbReference type="FunCoup" id="Q2T9T5">
    <property type="interactions" value="152"/>
</dbReference>
<dbReference type="STRING" id="9913.ENSBTAP00000041497"/>
<dbReference type="PaxDb" id="9913-ENSBTAP00000041497"/>
<dbReference type="Ensembl" id="ENSBTAT00000043967.3">
    <property type="protein sequence ID" value="ENSBTAP00000041497.2"/>
    <property type="gene ID" value="ENSBTAG00000031059.3"/>
</dbReference>
<dbReference type="Ensembl" id="ENSBTAT00000089393.1">
    <property type="protein sequence ID" value="ENSBTAP00000078396.1"/>
    <property type="gene ID" value="ENSBTAG00000031059.3"/>
</dbReference>
<dbReference type="Ensembl" id="ENSBTAT00000097782.1">
    <property type="protein sequence ID" value="ENSBTAP00000101215.1"/>
    <property type="gene ID" value="ENSBTAG00000031059.3"/>
</dbReference>
<dbReference type="Ensembl" id="ENSBTAT00000112629.1">
    <property type="protein sequence ID" value="ENSBTAP00000081773.1"/>
    <property type="gene ID" value="ENSBTAG00000031059.3"/>
</dbReference>
<dbReference type="GeneID" id="616659"/>
<dbReference type="KEGG" id="bta:616659"/>
<dbReference type="CTD" id="65999"/>
<dbReference type="VEuPathDB" id="HostDB:ENSBTAG00000031059"/>
<dbReference type="VGNC" id="VGNC:107228">
    <property type="gene designation" value="LRRC61"/>
</dbReference>
<dbReference type="eggNOG" id="KOG0531">
    <property type="taxonomic scope" value="Eukaryota"/>
</dbReference>
<dbReference type="GeneTree" id="ENSGT00390000006479"/>
<dbReference type="HOGENOM" id="CLU_1073482_0_0_1"/>
<dbReference type="InParanoid" id="Q2T9T5"/>
<dbReference type="OMA" id="YWESWPT"/>
<dbReference type="Proteomes" id="UP000009136">
    <property type="component" value="Chromosome 4"/>
</dbReference>
<dbReference type="Bgee" id="ENSBTAG00000031059">
    <property type="expression patterns" value="Expressed in retina and 105 other cell types or tissues"/>
</dbReference>
<dbReference type="GO" id="GO:0005737">
    <property type="term" value="C:cytoplasm"/>
    <property type="evidence" value="ECO:0000318"/>
    <property type="project" value="GO_Central"/>
</dbReference>
<dbReference type="GO" id="GO:0036158">
    <property type="term" value="P:outer dynein arm assembly"/>
    <property type="evidence" value="ECO:0000318"/>
    <property type="project" value="GO_Central"/>
</dbReference>
<dbReference type="FunFam" id="3.80.10.10:FF:000252">
    <property type="entry name" value="Leucine-rich repeat-containing protein 61"/>
    <property type="match status" value="1"/>
</dbReference>
<dbReference type="Gene3D" id="3.80.10.10">
    <property type="entry name" value="Ribonuclease Inhibitor"/>
    <property type="match status" value="1"/>
</dbReference>
<dbReference type="InterPro" id="IPR001611">
    <property type="entry name" value="Leu-rich_rpt"/>
</dbReference>
<dbReference type="InterPro" id="IPR032675">
    <property type="entry name" value="LRR_dom_sf"/>
</dbReference>
<dbReference type="PANTHER" id="PTHR18849">
    <property type="entry name" value="LEUCINE RICH REPEAT PROTEIN"/>
    <property type="match status" value="1"/>
</dbReference>
<dbReference type="PANTHER" id="PTHR18849:SF8">
    <property type="entry name" value="LEUCINE-RICH REPEAT-CONTAINING PROTEIN 61"/>
    <property type="match status" value="1"/>
</dbReference>
<dbReference type="Pfam" id="PF00560">
    <property type="entry name" value="LRR_1"/>
    <property type="match status" value="1"/>
</dbReference>
<dbReference type="SUPFAM" id="SSF52058">
    <property type="entry name" value="L domain-like"/>
    <property type="match status" value="1"/>
</dbReference>
<dbReference type="PROSITE" id="PS51450">
    <property type="entry name" value="LRR"/>
    <property type="match status" value="3"/>
</dbReference>
<organism>
    <name type="scientific">Bos taurus</name>
    <name type="common">Bovine</name>
    <dbReference type="NCBI Taxonomy" id="9913"/>
    <lineage>
        <taxon>Eukaryota</taxon>
        <taxon>Metazoa</taxon>
        <taxon>Chordata</taxon>
        <taxon>Craniata</taxon>
        <taxon>Vertebrata</taxon>
        <taxon>Euteleostomi</taxon>
        <taxon>Mammalia</taxon>
        <taxon>Eutheria</taxon>
        <taxon>Laurasiatheria</taxon>
        <taxon>Artiodactyla</taxon>
        <taxon>Ruminantia</taxon>
        <taxon>Pecora</taxon>
        <taxon>Bovidae</taxon>
        <taxon>Bovinae</taxon>
        <taxon>Bos</taxon>
    </lineage>
</organism>
<keyword id="KW-0433">Leucine-rich repeat</keyword>
<keyword id="KW-1185">Reference proteome</keyword>
<keyword id="KW-0677">Repeat</keyword>
<sequence>MEPRGEKSGEADGVRVTPQLLKARSGEFALESILLLKLRGLGLVGLGCLGDCLGLEWLDLSGNALTQLGPLASLRQLAVLNVADNRLTGLEPLAACENLQCLNAAGNLLAGPAQLQCLAGLRGLERLRLRDPLARLSNPLCASPCYWASVRELLPGLKVLDGERVSGRGSDFYQLCRDLDSSLSPDPGAPGPRPMEAQPWVEPGYWEALPPRSSSILEEACRQFQDTLQECHDLDRQAWDSLAQAMRALSPAGATAASFVF</sequence>
<feature type="chain" id="PRO_0000236795" description="Leucine-rich repeat-containing protein 61">
    <location>
        <begin position="1"/>
        <end position="261"/>
    </location>
</feature>
<feature type="repeat" description="LRR 1">
    <location>
        <begin position="54"/>
        <end position="75"/>
    </location>
</feature>
<feature type="repeat" description="LRR 2">
    <location>
        <begin position="76"/>
        <end position="97"/>
    </location>
</feature>
<feature type="repeat" description="LRR 3">
    <location>
        <begin position="98"/>
        <end position="119"/>
    </location>
</feature>
<feature type="domain" description="LRRCT">
    <location>
        <begin position="138"/>
        <end position="183"/>
    </location>
</feature>